<organism>
    <name type="scientific">Salmonella paratyphi A (strain AKU_12601)</name>
    <dbReference type="NCBI Taxonomy" id="554290"/>
    <lineage>
        <taxon>Bacteria</taxon>
        <taxon>Pseudomonadati</taxon>
        <taxon>Pseudomonadota</taxon>
        <taxon>Gammaproteobacteria</taxon>
        <taxon>Enterobacterales</taxon>
        <taxon>Enterobacteriaceae</taxon>
        <taxon>Salmonella</taxon>
    </lineage>
</organism>
<comment type="function">
    <text evidence="1">Redox regulated molecular chaperone. Protects both thermally unfolding and oxidatively damaged proteins from irreversible aggregation. Plays an important role in the bacterial defense system toward oxidative stress.</text>
</comment>
<comment type="subcellular location">
    <subcellularLocation>
        <location evidence="1">Cytoplasm</location>
    </subcellularLocation>
</comment>
<comment type="PTM">
    <text evidence="1">Under oxidizing conditions two disulfide bonds are formed involving the reactive cysteines. Under reducing conditions zinc is bound to the reactive cysteines and the protein is inactive.</text>
</comment>
<comment type="similarity">
    <text evidence="1">Belongs to the HSP33 family.</text>
</comment>
<sequence length="292" mass="32357">MPQHDQLHRYLFENFAVRGELVTVSETLQQILDNHTYPQPVKTVLAELLVATSLLTATLKFAGDITVQLQGDGPLSLAVINGNNQQQMRGVARVQGDIPDNADLKTLVGNGYLVITITPEEGERYQGVVGLEGDTLAACLEDYFLRSEQLPTRLFIRTGDVDGKPAAGGMLLQVMPAQNAQAEDFDHLAMLTETIKSEELLTLPANDVLWRLYHEEEVTLYDPQDVEFKCTCSRERCAGALKTLPDEEVDSILAEEGEIDMHCDYCGNHYLFNAMDIAEIRNNASPADPQVH</sequence>
<gene>
    <name evidence="1" type="primary">hslO</name>
    <name type="ordered locus">SSPA3138</name>
</gene>
<protein>
    <recommendedName>
        <fullName evidence="1">33 kDa chaperonin</fullName>
    </recommendedName>
    <alternativeName>
        <fullName evidence="1">Heat shock protein 33 homolog</fullName>
        <shortName evidence="1">HSP33</shortName>
    </alternativeName>
</protein>
<dbReference type="EMBL" id="FM200053">
    <property type="protein sequence ID" value="CAR61393.1"/>
    <property type="molecule type" value="Genomic_DNA"/>
</dbReference>
<dbReference type="RefSeq" id="WP_001135571.1">
    <property type="nucleotide sequence ID" value="NC_011147.1"/>
</dbReference>
<dbReference type="SMR" id="B5BHF6"/>
<dbReference type="KEGG" id="sek:SSPA3138"/>
<dbReference type="HOGENOM" id="CLU_054493_0_0_6"/>
<dbReference type="Proteomes" id="UP000001869">
    <property type="component" value="Chromosome"/>
</dbReference>
<dbReference type="GO" id="GO:0005737">
    <property type="term" value="C:cytoplasm"/>
    <property type="evidence" value="ECO:0007669"/>
    <property type="project" value="UniProtKB-SubCell"/>
</dbReference>
<dbReference type="GO" id="GO:0044183">
    <property type="term" value="F:protein folding chaperone"/>
    <property type="evidence" value="ECO:0007669"/>
    <property type="project" value="TreeGrafter"/>
</dbReference>
<dbReference type="GO" id="GO:0051082">
    <property type="term" value="F:unfolded protein binding"/>
    <property type="evidence" value="ECO:0007669"/>
    <property type="project" value="UniProtKB-UniRule"/>
</dbReference>
<dbReference type="GO" id="GO:0042026">
    <property type="term" value="P:protein refolding"/>
    <property type="evidence" value="ECO:0007669"/>
    <property type="project" value="TreeGrafter"/>
</dbReference>
<dbReference type="CDD" id="cd00498">
    <property type="entry name" value="Hsp33"/>
    <property type="match status" value="1"/>
</dbReference>
<dbReference type="FunFam" id="3.55.30.10:FF:000001">
    <property type="entry name" value="33 kDa chaperonin"/>
    <property type="match status" value="1"/>
</dbReference>
<dbReference type="Gene3D" id="1.10.287.480">
    <property type="entry name" value="helix hairpin bin"/>
    <property type="match status" value="1"/>
</dbReference>
<dbReference type="Gene3D" id="3.55.30.10">
    <property type="entry name" value="Hsp33 domain"/>
    <property type="match status" value="1"/>
</dbReference>
<dbReference type="Gene3D" id="3.90.1280.10">
    <property type="entry name" value="HSP33 redox switch-like"/>
    <property type="match status" value="1"/>
</dbReference>
<dbReference type="HAMAP" id="MF_00117">
    <property type="entry name" value="HslO"/>
    <property type="match status" value="1"/>
</dbReference>
<dbReference type="InterPro" id="IPR000397">
    <property type="entry name" value="Heat_shock_Hsp33"/>
</dbReference>
<dbReference type="InterPro" id="IPR016154">
    <property type="entry name" value="Heat_shock_Hsp33_C"/>
</dbReference>
<dbReference type="InterPro" id="IPR016153">
    <property type="entry name" value="Heat_shock_Hsp33_N"/>
</dbReference>
<dbReference type="InterPro" id="IPR023212">
    <property type="entry name" value="Hsp33_helix_hairpin_bin_dom_sf"/>
</dbReference>
<dbReference type="NCBIfam" id="NF001033">
    <property type="entry name" value="PRK00114.1"/>
    <property type="match status" value="1"/>
</dbReference>
<dbReference type="PANTHER" id="PTHR30111">
    <property type="entry name" value="33 KDA CHAPERONIN"/>
    <property type="match status" value="1"/>
</dbReference>
<dbReference type="PANTHER" id="PTHR30111:SF1">
    <property type="entry name" value="33 KDA CHAPERONIN"/>
    <property type="match status" value="1"/>
</dbReference>
<dbReference type="Pfam" id="PF01430">
    <property type="entry name" value="HSP33"/>
    <property type="match status" value="1"/>
</dbReference>
<dbReference type="PIRSF" id="PIRSF005261">
    <property type="entry name" value="Heat_shock_Hsp33"/>
    <property type="match status" value="1"/>
</dbReference>
<dbReference type="SUPFAM" id="SSF64397">
    <property type="entry name" value="Hsp33 domain"/>
    <property type="match status" value="1"/>
</dbReference>
<dbReference type="SUPFAM" id="SSF118352">
    <property type="entry name" value="HSP33 redox switch-like"/>
    <property type="match status" value="1"/>
</dbReference>
<accession>B5BHF6</accession>
<name>HSLO_SALPK</name>
<keyword id="KW-0143">Chaperone</keyword>
<keyword id="KW-0963">Cytoplasm</keyword>
<keyword id="KW-1015">Disulfide bond</keyword>
<keyword id="KW-0676">Redox-active center</keyword>
<keyword id="KW-0346">Stress response</keyword>
<keyword id="KW-0862">Zinc</keyword>
<evidence type="ECO:0000255" key="1">
    <source>
        <dbReference type="HAMAP-Rule" id="MF_00117"/>
    </source>
</evidence>
<reference key="1">
    <citation type="journal article" date="2009" name="BMC Genomics">
        <title>Pseudogene accumulation in the evolutionary histories of Salmonella enterica serovars Paratyphi A and Typhi.</title>
        <authorList>
            <person name="Holt K.E."/>
            <person name="Thomson N.R."/>
            <person name="Wain J."/>
            <person name="Langridge G.C."/>
            <person name="Hasan R."/>
            <person name="Bhutta Z.A."/>
            <person name="Quail M.A."/>
            <person name="Norbertczak H."/>
            <person name="Walker D."/>
            <person name="Simmonds M."/>
            <person name="White B."/>
            <person name="Bason N."/>
            <person name="Mungall K."/>
            <person name="Dougan G."/>
            <person name="Parkhill J."/>
        </authorList>
    </citation>
    <scope>NUCLEOTIDE SEQUENCE [LARGE SCALE GENOMIC DNA]</scope>
    <source>
        <strain>AKU_12601</strain>
    </source>
</reference>
<feature type="chain" id="PRO_1000095029" description="33 kDa chaperonin">
    <location>
        <begin position="1"/>
        <end position="292"/>
    </location>
</feature>
<feature type="disulfide bond" description="Redox-active" evidence="1">
    <location>
        <begin position="230"/>
        <end position="232"/>
    </location>
</feature>
<feature type="disulfide bond" description="Redox-active" evidence="1">
    <location>
        <begin position="263"/>
        <end position="266"/>
    </location>
</feature>
<proteinExistence type="inferred from homology"/>